<protein>
    <recommendedName>
        <fullName evidence="2">Exoribonuclease 2</fullName>
        <ecNumber evidence="2">3.1.13.1</ecNumber>
    </recommendedName>
    <alternativeName>
        <fullName evidence="2">Exoribonuclease II</fullName>
        <shortName evidence="2">RNase II</shortName>
        <shortName evidence="2">Ribonuclease II</shortName>
    </alternativeName>
</protein>
<name>RNB_SODGM</name>
<accession>Q2NST6</accession>
<organism>
    <name type="scientific">Sodalis glossinidius (strain morsitans)</name>
    <dbReference type="NCBI Taxonomy" id="343509"/>
    <lineage>
        <taxon>Bacteria</taxon>
        <taxon>Pseudomonadati</taxon>
        <taxon>Pseudomonadota</taxon>
        <taxon>Gammaproteobacteria</taxon>
        <taxon>Enterobacterales</taxon>
        <taxon>Bruguierivoracaceae</taxon>
        <taxon>Sodalis</taxon>
    </lineage>
</organism>
<comment type="function">
    <text evidence="2">Involved in mRNA degradation. Hydrolyzes single-stranded polyribonucleotides processively in the 3' to 5' direction.</text>
</comment>
<comment type="catalytic activity">
    <reaction evidence="2">
        <text>Exonucleolytic cleavage in the 3'- to 5'-direction to yield nucleoside 5'-phosphates.</text>
        <dbReference type="EC" id="3.1.13.1"/>
    </reaction>
</comment>
<comment type="subcellular location">
    <subcellularLocation>
        <location evidence="2">Cytoplasm</location>
    </subcellularLocation>
</comment>
<comment type="similarity">
    <text evidence="2">Belongs to the RNR ribonuclease family. RNase II subfamily.</text>
</comment>
<feature type="chain" id="PRO_1000063902" description="Exoribonuclease 2">
    <location>
        <begin position="1"/>
        <end position="644"/>
    </location>
</feature>
<feature type="domain" description="RNB" evidence="1">
    <location>
        <begin position="190"/>
        <end position="516"/>
    </location>
</feature>
<feature type="domain" description="S1 motif" evidence="2">
    <location>
        <begin position="562"/>
        <end position="644"/>
    </location>
</feature>
<gene>
    <name evidence="2" type="primary">rnb</name>
    <name type="ordered locus">SG1514</name>
</gene>
<evidence type="ECO:0000255" key="1"/>
<evidence type="ECO:0000255" key="2">
    <source>
        <dbReference type="HAMAP-Rule" id="MF_01036"/>
    </source>
</evidence>
<keyword id="KW-0963">Cytoplasm</keyword>
<keyword id="KW-0269">Exonuclease</keyword>
<keyword id="KW-0378">Hydrolase</keyword>
<keyword id="KW-0540">Nuclease</keyword>
<keyword id="KW-0694">RNA-binding</keyword>
<dbReference type="EC" id="3.1.13.1" evidence="2"/>
<dbReference type="EMBL" id="AP008232">
    <property type="protein sequence ID" value="BAE74789.1"/>
    <property type="molecule type" value="Genomic_DNA"/>
</dbReference>
<dbReference type="RefSeq" id="WP_011411334.1">
    <property type="nucleotide sequence ID" value="NC_007712.1"/>
</dbReference>
<dbReference type="SMR" id="Q2NST6"/>
<dbReference type="STRING" id="343509.SG1514"/>
<dbReference type="KEGG" id="sgl:SG1514"/>
<dbReference type="eggNOG" id="COG4776">
    <property type="taxonomic scope" value="Bacteria"/>
</dbReference>
<dbReference type="HOGENOM" id="CLU_002333_7_3_6"/>
<dbReference type="OrthoDB" id="9764149at2"/>
<dbReference type="BioCyc" id="SGLO343509:SGP1_RS13470-MONOMER"/>
<dbReference type="Proteomes" id="UP000001932">
    <property type="component" value="Chromosome"/>
</dbReference>
<dbReference type="GO" id="GO:0005829">
    <property type="term" value="C:cytosol"/>
    <property type="evidence" value="ECO:0007669"/>
    <property type="project" value="UniProtKB-ARBA"/>
</dbReference>
<dbReference type="GO" id="GO:0008859">
    <property type="term" value="F:exoribonuclease II activity"/>
    <property type="evidence" value="ECO:0007669"/>
    <property type="project" value="UniProtKB-UniRule"/>
</dbReference>
<dbReference type="GO" id="GO:0003723">
    <property type="term" value="F:RNA binding"/>
    <property type="evidence" value="ECO:0007669"/>
    <property type="project" value="UniProtKB-KW"/>
</dbReference>
<dbReference type="GO" id="GO:0006402">
    <property type="term" value="P:mRNA catabolic process"/>
    <property type="evidence" value="ECO:0007669"/>
    <property type="project" value="UniProtKB-UniRule"/>
</dbReference>
<dbReference type="FunFam" id="2.40.50.140:FF:000079">
    <property type="entry name" value="Exoribonuclease 2"/>
    <property type="match status" value="1"/>
</dbReference>
<dbReference type="Gene3D" id="2.40.50.640">
    <property type="match status" value="1"/>
</dbReference>
<dbReference type="Gene3D" id="2.40.50.140">
    <property type="entry name" value="Nucleic acid-binding proteins"/>
    <property type="match status" value="2"/>
</dbReference>
<dbReference type="HAMAP" id="MF_01036">
    <property type="entry name" value="RNase_II"/>
    <property type="match status" value="1"/>
</dbReference>
<dbReference type="InterPro" id="IPR011129">
    <property type="entry name" value="CSD"/>
</dbReference>
<dbReference type="InterPro" id="IPR012340">
    <property type="entry name" value="NA-bd_OB-fold"/>
</dbReference>
<dbReference type="InterPro" id="IPR013223">
    <property type="entry name" value="RNase_B_OB_dom"/>
</dbReference>
<dbReference type="InterPro" id="IPR011804">
    <property type="entry name" value="RNase_II"/>
</dbReference>
<dbReference type="InterPro" id="IPR001900">
    <property type="entry name" value="RNase_II/R"/>
</dbReference>
<dbReference type="InterPro" id="IPR022966">
    <property type="entry name" value="RNase_II/R_CS"/>
</dbReference>
<dbReference type="InterPro" id="IPR004476">
    <property type="entry name" value="RNase_II/RNase_R"/>
</dbReference>
<dbReference type="InterPro" id="IPR050180">
    <property type="entry name" value="RNR_Ribonuclease"/>
</dbReference>
<dbReference type="InterPro" id="IPR003029">
    <property type="entry name" value="S1_domain"/>
</dbReference>
<dbReference type="NCBIfam" id="TIGR00358">
    <property type="entry name" value="3_prime_RNase"/>
    <property type="match status" value="1"/>
</dbReference>
<dbReference type="NCBIfam" id="NF003455">
    <property type="entry name" value="PRK05054.1"/>
    <property type="match status" value="1"/>
</dbReference>
<dbReference type="NCBIfam" id="TIGR02062">
    <property type="entry name" value="RNase_B"/>
    <property type="match status" value="1"/>
</dbReference>
<dbReference type="PANTHER" id="PTHR23355:SF37">
    <property type="entry name" value="EXORIBONUCLEASE 2"/>
    <property type="match status" value="1"/>
</dbReference>
<dbReference type="PANTHER" id="PTHR23355">
    <property type="entry name" value="RIBONUCLEASE"/>
    <property type="match status" value="1"/>
</dbReference>
<dbReference type="Pfam" id="PF08206">
    <property type="entry name" value="OB_RNB"/>
    <property type="match status" value="1"/>
</dbReference>
<dbReference type="Pfam" id="PF00773">
    <property type="entry name" value="RNB"/>
    <property type="match status" value="1"/>
</dbReference>
<dbReference type="Pfam" id="PF00575">
    <property type="entry name" value="S1"/>
    <property type="match status" value="1"/>
</dbReference>
<dbReference type="SMART" id="SM00357">
    <property type="entry name" value="CSP"/>
    <property type="match status" value="1"/>
</dbReference>
<dbReference type="SMART" id="SM00955">
    <property type="entry name" value="RNB"/>
    <property type="match status" value="1"/>
</dbReference>
<dbReference type="SUPFAM" id="SSF50249">
    <property type="entry name" value="Nucleic acid-binding proteins"/>
    <property type="match status" value="4"/>
</dbReference>
<dbReference type="PROSITE" id="PS01175">
    <property type="entry name" value="RIBONUCLEASE_II"/>
    <property type="match status" value="1"/>
</dbReference>
<proteinExistence type="inferred from homology"/>
<sequence length="644" mass="72631">MFQDNPLLAQLKQQLHSQTPRVEGVVKGTEKGFGFLEVDAQKSYFISPPFMKKVMHGDKISAVVRTEKEREIAEPEELIEPFLTRFIGRVQVKDERLAVVPDHPLIKEVIPTRPQHGVDQMFQTGDWAVAEMRRHPLKGDRQFYAEITALVTRADDHFAPWWVTLARHNLERAAPTMPEGVSLQEDGPAREDLTALDFITIDSASTEDMDDAIHLAPAPNGAWVMTVAIADPTAWVPAGSPLDNIARERAFTNYLPGFNIPMLPRALSDDLCSLRAHERRPALACRVTVRPNGTLADDARFFTAWIESKGKLAYDNVSDWLENLGSWQPETEAIADQIRLLHDVCLARSAWRQRHALVFKDRPDYRFVLNEKGNVDDIVVEPRRIANRMIEEAMITANVCAARVLRDGLGYGLYNVHHGFDPLLVDQAVAILHSHQIEVDPADLLTLEGFCALRRRLDAQPTSYLDSRIRRFQTFAEVSTVPGPHFGLGLDAYATWTSPIRKYGDMINHRLLKALIGVGDAERPNEEVTLRLAERRRQNRMAERDVGDWLYARFLQPKAGSDSRFAAEIIDISRGGMRVRLLNNGAVAFIPAPFIHSVRDELVCSQDTGTVQVKGEERYRQGDTLDVTLAEVRMENRSVIARPV</sequence>
<reference key="1">
    <citation type="journal article" date="2006" name="Genome Res.">
        <title>Massive genome erosion and functional adaptations provide insights into the symbiotic lifestyle of Sodalis glossinidius in the tsetse host.</title>
        <authorList>
            <person name="Toh H."/>
            <person name="Weiss B.L."/>
            <person name="Perkin S.A.H."/>
            <person name="Yamashita A."/>
            <person name="Oshima K."/>
            <person name="Hattori M."/>
            <person name="Aksoy S."/>
        </authorList>
    </citation>
    <scope>NUCLEOTIDE SEQUENCE [LARGE SCALE GENOMIC DNA]</scope>
    <source>
        <strain>morsitans</strain>
    </source>
</reference>